<gene>
    <name evidence="2" type="primary">SELENOP</name>
</gene>
<proteinExistence type="evidence at transcript level"/>
<reference key="1">
    <citation type="journal article" date="1995" name="Brain Res. Mol. Brain Res.">
        <title>Molecular cloning of cDNA encoding a bovine selenoprotein P-like protein containing 12 selenocysteines and a (His-Pro) rich domain insertion, and its regional expression.</title>
        <authorList>
            <person name="Saijoh K."/>
            <person name="Saito N."/>
            <person name="Lee M.J."/>
            <person name="Fujii M."/>
            <person name="Kobayashi T."/>
            <person name="Sumino K."/>
        </authorList>
    </citation>
    <scope>NUCLEOTIDE SEQUENCE [MRNA]</scope>
    <scope>SELENOCYSTEINE AT SEC-59; SEC-297; SEC-307; SEC-338; SEC-350; SEC-363; SEC-365; SEC-372; SEC-388; SEC-390; SEC-397 AND SEC-399</scope>
    <scope>FUNCTION</scope>
    <scope>TISSUE SPECIFICITY</scope>
    <source>
        <tissue>Cerebellum</tissue>
    </source>
</reference>
<reference key="2">
    <citation type="journal article" date="1997" name="Gene">
        <title>Analysis of bovine selenoprotein P-like protein gene and availability of metal responsive element (MRE) located in its promoter.</title>
        <authorList>
            <person name="Fujii M."/>
            <person name="Saijoh K."/>
            <person name="Kobayashi T."/>
            <person name="Fujii S."/>
            <person name="Lee M.J."/>
            <person name="Sumino K."/>
        </authorList>
    </citation>
    <scope>NUCLEOTIDE SEQUENCE [GENOMIC DNA]</scope>
</reference>
<reference key="3">
    <citation type="submission" date="2007-01" db="EMBL/GenBank/DDBJ databases">
        <authorList>
            <person name="Saijoh K."/>
        </authorList>
    </citation>
    <scope>SEQUENCE REVISION TO 59; 297; 307; 338; 350; 363; 365; 372; 388; 390; 397 AND 399</scope>
</reference>
<reference key="4">
    <citation type="submission" date="1999-09" db="EMBL/GenBank/DDBJ databases">
        <title>Bovine endothelial selenoprotein P.</title>
        <authorList>
            <person name="Hara S."/>
            <person name="Imura N."/>
            <person name="Shoji Y."/>
        </authorList>
    </citation>
    <scope>NUCLEOTIDE SEQUENCE [MRNA]</scope>
</reference>
<protein>
    <recommendedName>
        <fullName evidence="7">Selenoprotein P</fullName>
        <shortName>SeP</shortName>
    </recommendedName>
    <alternativeName>
        <fullName evidence="6">Selenoprotein P-like protein</fullName>
    </alternativeName>
</protein>
<name>SEPP1_BOVIN</name>
<accession>P49907</accession>
<accession>O19003</accession>
<accession>Q9N2H6</accession>
<keyword id="KW-0325">Glycoprotein</keyword>
<keyword id="KW-0597">Phosphoprotein</keyword>
<keyword id="KW-1185">Reference proteome</keyword>
<keyword id="KW-0677">Repeat</keyword>
<keyword id="KW-0964">Secreted</keyword>
<keyword id="KW-0711">Selenium</keyword>
<keyword id="KW-0712">Selenocysteine</keyword>
<keyword id="KW-0732">Signal</keyword>
<sequence length="402" mass="45488">MWRGLGLALALCLLLTGGTESQGQSSYCKQPPPWSIKDQDPMLNSYGSVTVVALLQASUYLCILQASRLEDLRVKLEKEGYSNISYVVVNHQGISSRLKYVHLKNKVSEHIPVYQQEENQPDVWTLLNGNKDDFLIYDRCGRLVYHLGLPYSFLTFTYVEDSIKTVYCEDKCGNCSLKALEDEDVCKNVFLATKEKTAEASQRHHHPHPHSHPHPHPHPHPHPHPHPHHGHQLHENAHLSESPKPDTPDTPENPPPSGLHHHHHRHKGPQRQGHSDNCDTPVGSESLQPSLPQKKLURKRCINQLLUQFPKDSESALSSCCCHCRHLVFEKTGSAITUQCTEKLPSLCSUQGLLAEENVIESUQURLPPAAUQAAGQQLNPTEASTKUSUKNKAKMUKUPSN</sequence>
<organism>
    <name type="scientific">Bos taurus</name>
    <name type="common">Bovine</name>
    <dbReference type="NCBI Taxonomy" id="9913"/>
    <lineage>
        <taxon>Eukaryota</taxon>
        <taxon>Metazoa</taxon>
        <taxon>Chordata</taxon>
        <taxon>Craniata</taxon>
        <taxon>Vertebrata</taxon>
        <taxon>Euteleostomi</taxon>
        <taxon>Mammalia</taxon>
        <taxon>Eutheria</taxon>
        <taxon>Laurasiatheria</taxon>
        <taxon>Artiodactyla</taxon>
        <taxon>Ruminantia</taxon>
        <taxon>Pecora</taxon>
        <taxon>Bovidae</taxon>
        <taxon>Bovinae</taxon>
        <taxon>Bos</taxon>
    </lineage>
</organism>
<dbReference type="EMBL" id="D25220">
    <property type="protein sequence ID" value="BAA04949.2"/>
    <property type="molecule type" value="mRNA"/>
</dbReference>
<dbReference type="EMBL" id="D88033">
    <property type="protein sequence ID" value="BAA23414.2"/>
    <property type="molecule type" value="Genomic_DNA"/>
</dbReference>
<dbReference type="EMBL" id="AB032826">
    <property type="protein sequence ID" value="BAA84781.1"/>
    <property type="molecule type" value="mRNA"/>
</dbReference>
<dbReference type="RefSeq" id="NP_776884.2">
    <property type="nucleotide sequence ID" value="NM_174459.3"/>
</dbReference>
<dbReference type="FunCoup" id="P49907">
    <property type="interactions" value="76"/>
</dbReference>
<dbReference type="STRING" id="9913.ENSBTAP00000057403"/>
<dbReference type="GlyCosmos" id="P49907">
    <property type="glycosylation" value="2 sites, No reported glycans"/>
</dbReference>
<dbReference type="GlyGen" id="P49907">
    <property type="glycosylation" value="2 sites"/>
</dbReference>
<dbReference type="Ensembl" id="ENSBTAT00000084253.1">
    <property type="protein sequence ID" value="ENSBTAP00000057403.1"/>
    <property type="gene ID" value="ENSBTAG00000054085.1"/>
</dbReference>
<dbReference type="GeneID" id="282066"/>
<dbReference type="KEGG" id="bta:282066"/>
<dbReference type="CTD" id="6414"/>
<dbReference type="VEuPathDB" id="HostDB:ENSBTAG00000054085"/>
<dbReference type="VGNC" id="VGNC:109401">
    <property type="gene designation" value="SELENOP"/>
</dbReference>
<dbReference type="GeneTree" id="ENSGT00510000049326"/>
<dbReference type="InParanoid" id="P49907"/>
<dbReference type="OMA" id="XQASQQL"/>
<dbReference type="OrthoDB" id="6134775at2759"/>
<dbReference type="Reactome" id="R-BTA-114608">
    <property type="pathway name" value="Platelet degranulation"/>
</dbReference>
<dbReference type="Proteomes" id="UP000009136">
    <property type="component" value="Chromosome 20"/>
</dbReference>
<dbReference type="Bgee" id="ENSBTAG00000054085">
    <property type="expression patterns" value="Expressed in liver and 104 other cell types or tissues"/>
</dbReference>
<dbReference type="GO" id="GO:0005576">
    <property type="term" value="C:extracellular region"/>
    <property type="evidence" value="ECO:0000318"/>
    <property type="project" value="GO_Central"/>
</dbReference>
<dbReference type="GO" id="GO:0008430">
    <property type="term" value="F:selenium binding"/>
    <property type="evidence" value="ECO:0000318"/>
    <property type="project" value="GO_Central"/>
</dbReference>
<dbReference type="GO" id="GO:0001887">
    <property type="term" value="P:selenium compound metabolic process"/>
    <property type="evidence" value="ECO:0000318"/>
    <property type="project" value="GO_Central"/>
</dbReference>
<dbReference type="InterPro" id="IPR007671">
    <property type="entry name" value="Selenoprotein-P_N"/>
</dbReference>
<dbReference type="InterPro" id="IPR007672">
    <property type="entry name" value="SelP_C"/>
</dbReference>
<dbReference type="InterPro" id="IPR037941">
    <property type="entry name" value="SeP"/>
</dbReference>
<dbReference type="PANTHER" id="PTHR10105">
    <property type="entry name" value="SELENOPROTEIN P"/>
    <property type="match status" value="1"/>
</dbReference>
<dbReference type="PANTHER" id="PTHR10105:SF3">
    <property type="entry name" value="SELENOPROTEIN P"/>
    <property type="match status" value="1"/>
</dbReference>
<dbReference type="Pfam" id="PF04593">
    <property type="entry name" value="SelP_C"/>
    <property type="match status" value="1"/>
</dbReference>
<dbReference type="Pfam" id="PF04592">
    <property type="entry name" value="SelP_N"/>
    <property type="match status" value="1"/>
</dbReference>
<evidence type="ECO:0000250" key="1"/>
<evidence type="ECO:0000250" key="2">
    <source>
        <dbReference type="UniProtKB" id="P49908"/>
    </source>
</evidence>
<evidence type="ECO:0000250" key="3">
    <source>
        <dbReference type="UniProtKB" id="P70274"/>
    </source>
</evidence>
<evidence type="ECO:0000256" key="4">
    <source>
        <dbReference type="SAM" id="MobiDB-lite"/>
    </source>
</evidence>
<evidence type="ECO:0000269" key="5">
    <source>
    </source>
</evidence>
<evidence type="ECO:0000303" key="6">
    <source>
    </source>
</evidence>
<evidence type="ECO:0000305" key="7"/>
<comment type="function">
    <text evidence="5">Constitutes a major selenium pool in the brain and may play an important role in developing and/or modulating the morphology of neurons and/or glial cells.</text>
</comment>
<comment type="subcellular location">
    <subcellularLocation>
        <location evidence="3">Secreted</location>
    </subcellularLocation>
    <text evidence="3">Passes from plasma into the glomerular filtrate where it is removed by endocytosis mediated by LRP2 in the proximal tubule epithelium.</text>
</comment>
<comment type="tissue specificity">
    <text evidence="5">Brain and kidney. Most prominently expressed in the cerebellar cortex, hippocampus and olfactory bulb.</text>
</comment>
<comment type="domain">
    <text evidence="3">The C-terminus is not required for endocytic uptake in the proximal tubule epithelium.</text>
</comment>
<comment type="PTM">
    <text evidence="1">Phosphorylation sites are present in the extracellular medium.</text>
</comment>
<comment type="similarity">
    <text evidence="7">Belongs to the selenoprotein P family.</text>
</comment>
<feature type="signal peptide" evidence="1">
    <location>
        <begin position="1"/>
        <end position="19"/>
    </location>
</feature>
<feature type="chain" id="PRO_0000022312" description="Selenoprotein P">
    <location>
        <begin position="20"/>
        <end position="402"/>
    </location>
</feature>
<feature type="repeat" description="1">
    <location>
        <begin position="204"/>
        <end position="205"/>
    </location>
</feature>
<feature type="repeat" description="2">
    <location>
        <begin position="206"/>
        <end position="207"/>
    </location>
</feature>
<feature type="repeat" description="3">
    <location>
        <begin position="208"/>
        <end position="209"/>
    </location>
</feature>
<feature type="repeat" description="4">
    <location>
        <begin position="210"/>
        <end position="211"/>
    </location>
</feature>
<feature type="repeat" description="5">
    <location>
        <begin position="212"/>
        <end position="213"/>
    </location>
</feature>
<feature type="repeat" description="6">
    <location>
        <begin position="214"/>
        <end position="215"/>
    </location>
</feature>
<feature type="repeat" description="7">
    <location>
        <begin position="216"/>
        <end position="217"/>
    </location>
</feature>
<feature type="repeat" description="8">
    <location>
        <begin position="218"/>
        <end position="219"/>
    </location>
</feature>
<feature type="repeat" description="9">
    <location>
        <begin position="220"/>
        <end position="221"/>
    </location>
</feature>
<feature type="repeat" description="10">
    <location>
        <begin position="222"/>
        <end position="223"/>
    </location>
</feature>
<feature type="repeat" description="11">
    <location>
        <begin position="224"/>
        <end position="225"/>
    </location>
</feature>
<feature type="repeat" description="12">
    <location>
        <begin position="226"/>
        <end position="227"/>
    </location>
</feature>
<feature type="repeat" description="13">
    <location>
        <begin position="228"/>
        <end position="229"/>
    </location>
</feature>
<feature type="region of interest" description="Disordered" evidence="4">
    <location>
        <begin position="196"/>
        <end position="291"/>
    </location>
</feature>
<feature type="region of interest" description="13 X 2 AA tandem repeats of H-[PHS]">
    <location>
        <begin position="204"/>
        <end position="229"/>
    </location>
</feature>
<feature type="region of interest" description="Disordered" evidence="4">
    <location>
        <begin position="367"/>
        <end position="402"/>
    </location>
</feature>
<feature type="compositionally biased region" description="Basic residues" evidence="4">
    <location>
        <begin position="203"/>
        <end position="231"/>
    </location>
</feature>
<feature type="compositionally biased region" description="Basic and acidic residues" evidence="4">
    <location>
        <begin position="232"/>
        <end position="247"/>
    </location>
</feature>
<feature type="compositionally biased region" description="Basic residues" evidence="4">
    <location>
        <begin position="259"/>
        <end position="269"/>
    </location>
</feature>
<feature type="non-standard amino acid" description="Selenocysteine">
    <location>
        <position position="59"/>
    </location>
</feature>
<feature type="non-standard amino acid" description="Selenocysteine">
    <location>
        <position position="297"/>
    </location>
</feature>
<feature type="non-standard amino acid" description="Selenocysteine">
    <location>
        <position position="307"/>
    </location>
</feature>
<feature type="non-standard amino acid" description="Selenocysteine">
    <location>
        <position position="338"/>
    </location>
</feature>
<feature type="non-standard amino acid" description="Selenocysteine">
    <location>
        <position position="350"/>
    </location>
</feature>
<feature type="non-standard amino acid" description="Selenocysteine">
    <location>
        <position position="363"/>
    </location>
</feature>
<feature type="non-standard amino acid" description="Selenocysteine">
    <location>
        <position position="365"/>
    </location>
</feature>
<feature type="non-standard amino acid" description="Selenocysteine">
    <location>
        <position position="372"/>
    </location>
</feature>
<feature type="non-standard amino acid" description="Selenocysteine">
    <location>
        <position position="388"/>
    </location>
</feature>
<feature type="non-standard amino acid" description="Selenocysteine">
    <location>
        <position position="390"/>
    </location>
</feature>
<feature type="non-standard amino acid" description="Selenocysteine">
    <location>
        <position position="397"/>
    </location>
</feature>
<feature type="non-standard amino acid" description="Selenocysteine">
    <location>
        <position position="399"/>
    </location>
</feature>
<feature type="modified residue" description="Phosphoserine" evidence="2">
    <location>
        <position position="284"/>
    </location>
</feature>
<feature type="glycosylation site" description="N-linked (GlcNAc...) asparagine" evidence="1">
    <location>
        <position position="83"/>
    </location>
</feature>
<feature type="glycosylation site" description="N-linked (GlcNAc...) asparagine" evidence="1">
    <location>
        <position position="174"/>
    </location>
</feature>
<feature type="sequence conflict" description="In Ref. 1; BAA04949." evidence="7" ref="1">
    <original>KALE</original>
    <variation>SRPQ</variation>
    <location>
        <begin position="178"/>
        <end position="181"/>
    </location>
</feature>
<feature type="sequence conflict" description="In Ref. 4; BAA84781." evidence="7" ref="4">
    <location>
        <begin position="211"/>
        <end position="226"/>
    </location>
</feature>
<feature type="sequence conflict" description="In Ref. 1; BAA04949." evidence="7" ref="1">
    <original>P</original>
    <variation>T</variation>
    <location>
        <position position="256"/>
    </location>
</feature>
<feature type="sequence conflict" description="In Ref. 1; BAA04949." evidence="7" ref="1">
    <original>V</original>
    <variation>L</variation>
    <location>
        <position position="282"/>
    </location>
</feature>
<feature type="sequence conflict" description="In Ref. 1; BAA04949." evidence="7" ref="1">
    <original>D</original>
    <variation>Y</variation>
    <location>
        <position position="312"/>
    </location>
</feature>